<proteinExistence type="inferred from homology"/>
<comment type="function">
    <text evidence="1">Negative regulator of class I heat shock genes (grpE-dnaK-dnaJ and groELS operons). Prevents heat-shock induction of these operons.</text>
</comment>
<comment type="similarity">
    <text evidence="1">Belongs to the HrcA family.</text>
</comment>
<name>HRCA_CHLAA</name>
<sequence length="372" mass="40955">MSGPLTERRQMILKLVIQEFVDTATPVASETLVRKYRLPVSSATVRNDMAALEELGFLTHPHTSGGRIPTDAGYRFFVENLMERTTLSPAEQRMIRHQFYQVRGELDQWVQLACAVLARTAHNASVATAPRAEQLRFKSLELIAIHETMALAVIVFHGGIVKQQTLPIEPGRTPEDLRRAAGLVSDLLADATLSRAEELAAIATFNGVPLSEFERTLVDLVVRAMSVFEEQAQEQIYSDGILEMLSQPEFLPASGRDDAERAIERLRRTLEILKSGRGLSPLIPQALASGGVQVIIGGEHSEDTMRDYSVILARYGVEGALVGVLGVIGPTRMAYPRSISTVRYIASLMTNLLADLYHVNTRPSDIEPAAEL</sequence>
<keyword id="KW-1185">Reference proteome</keyword>
<keyword id="KW-0678">Repressor</keyword>
<keyword id="KW-0346">Stress response</keyword>
<keyword id="KW-0804">Transcription</keyword>
<keyword id="KW-0805">Transcription regulation</keyword>
<dbReference type="EMBL" id="CP000909">
    <property type="protein sequence ID" value="ABY35288.1"/>
    <property type="molecule type" value="Genomic_DNA"/>
</dbReference>
<dbReference type="RefSeq" id="WP_012257942.1">
    <property type="nucleotide sequence ID" value="NC_010175.1"/>
</dbReference>
<dbReference type="RefSeq" id="YP_001635677.1">
    <property type="nucleotide sequence ID" value="NC_010175.1"/>
</dbReference>
<dbReference type="SMR" id="A9WEX3"/>
<dbReference type="FunCoup" id="A9WEX3">
    <property type="interactions" value="201"/>
</dbReference>
<dbReference type="STRING" id="324602.Caur_2076"/>
<dbReference type="EnsemblBacteria" id="ABY35288">
    <property type="protein sequence ID" value="ABY35288"/>
    <property type="gene ID" value="Caur_2076"/>
</dbReference>
<dbReference type="KEGG" id="cau:Caur_2076"/>
<dbReference type="PATRIC" id="fig|324602.8.peg.2356"/>
<dbReference type="eggNOG" id="COG1420">
    <property type="taxonomic scope" value="Bacteria"/>
</dbReference>
<dbReference type="HOGENOM" id="CLU_050019_1_0_0"/>
<dbReference type="InParanoid" id="A9WEX3"/>
<dbReference type="Proteomes" id="UP000002008">
    <property type="component" value="Chromosome"/>
</dbReference>
<dbReference type="GO" id="GO:0003677">
    <property type="term" value="F:DNA binding"/>
    <property type="evidence" value="ECO:0007669"/>
    <property type="project" value="InterPro"/>
</dbReference>
<dbReference type="GO" id="GO:0045892">
    <property type="term" value="P:negative regulation of DNA-templated transcription"/>
    <property type="evidence" value="ECO:0000318"/>
    <property type="project" value="GO_Central"/>
</dbReference>
<dbReference type="Gene3D" id="3.30.450.40">
    <property type="match status" value="1"/>
</dbReference>
<dbReference type="Gene3D" id="3.30.390.60">
    <property type="entry name" value="Heat-inducible transcription repressor hrca homolog, domain 3"/>
    <property type="match status" value="1"/>
</dbReference>
<dbReference type="Gene3D" id="1.10.10.10">
    <property type="entry name" value="Winged helix-like DNA-binding domain superfamily/Winged helix DNA-binding domain"/>
    <property type="match status" value="1"/>
</dbReference>
<dbReference type="HAMAP" id="MF_00081">
    <property type="entry name" value="HrcA"/>
    <property type="match status" value="1"/>
</dbReference>
<dbReference type="InterPro" id="IPR029016">
    <property type="entry name" value="GAF-like_dom_sf"/>
</dbReference>
<dbReference type="InterPro" id="IPR002571">
    <property type="entry name" value="HrcA"/>
</dbReference>
<dbReference type="InterPro" id="IPR021153">
    <property type="entry name" value="HrcA_C"/>
</dbReference>
<dbReference type="InterPro" id="IPR036388">
    <property type="entry name" value="WH-like_DNA-bd_sf"/>
</dbReference>
<dbReference type="InterPro" id="IPR036390">
    <property type="entry name" value="WH_DNA-bd_sf"/>
</dbReference>
<dbReference type="InterPro" id="IPR023120">
    <property type="entry name" value="WHTH_transcript_rep_HrcA_IDD"/>
</dbReference>
<dbReference type="NCBIfam" id="TIGR00331">
    <property type="entry name" value="hrcA"/>
    <property type="match status" value="1"/>
</dbReference>
<dbReference type="PANTHER" id="PTHR34824">
    <property type="entry name" value="HEAT-INDUCIBLE TRANSCRIPTION REPRESSOR HRCA"/>
    <property type="match status" value="1"/>
</dbReference>
<dbReference type="PANTHER" id="PTHR34824:SF1">
    <property type="entry name" value="HEAT-INDUCIBLE TRANSCRIPTION REPRESSOR HRCA"/>
    <property type="match status" value="1"/>
</dbReference>
<dbReference type="Pfam" id="PF01628">
    <property type="entry name" value="HrcA"/>
    <property type="match status" value="1"/>
</dbReference>
<dbReference type="PIRSF" id="PIRSF005485">
    <property type="entry name" value="HrcA"/>
    <property type="match status" value="1"/>
</dbReference>
<dbReference type="SUPFAM" id="SSF55781">
    <property type="entry name" value="GAF domain-like"/>
    <property type="match status" value="1"/>
</dbReference>
<dbReference type="SUPFAM" id="SSF46785">
    <property type="entry name" value="Winged helix' DNA-binding domain"/>
    <property type="match status" value="1"/>
</dbReference>
<evidence type="ECO:0000255" key="1">
    <source>
        <dbReference type="HAMAP-Rule" id="MF_00081"/>
    </source>
</evidence>
<accession>A9WEX3</accession>
<protein>
    <recommendedName>
        <fullName evidence="1">Heat-inducible transcription repressor HrcA</fullName>
    </recommendedName>
</protein>
<organism>
    <name type="scientific">Chloroflexus aurantiacus (strain ATCC 29366 / DSM 635 / J-10-fl)</name>
    <dbReference type="NCBI Taxonomy" id="324602"/>
    <lineage>
        <taxon>Bacteria</taxon>
        <taxon>Bacillati</taxon>
        <taxon>Chloroflexota</taxon>
        <taxon>Chloroflexia</taxon>
        <taxon>Chloroflexales</taxon>
        <taxon>Chloroflexineae</taxon>
        <taxon>Chloroflexaceae</taxon>
        <taxon>Chloroflexus</taxon>
    </lineage>
</organism>
<gene>
    <name evidence="1" type="primary">hrcA</name>
    <name type="ordered locus">Caur_2076</name>
</gene>
<reference key="1">
    <citation type="journal article" date="2011" name="BMC Genomics">
        <title>Complete genome sequence of the filamentous anoxygenic phototrophic bacterium Chloroflexus aurantiacus.</title>
        <authorList>
            <person name="Tang K.H."/>
            <person name="Barry K."/>
            <person name="Chertkov O."/>
            <person name="Dalin E."/>
            <person name="Han C.S."/>
            <person name="Hauser L.J."/>
            <person name="Honchak B.M."/>
            <person name="Karbach L.E."/>
            <person name="Land M.L."/>
            <person name="Lapidus A."/>
            <person name="Larimer F.W."/>
            <person name="Mikhailova N."/>
            <person name="Pitluck S."/>
            <person name="Pierson B.K."/>
            <person name="Blankenship R.E."/>
        </authorList>
    </citation>
    <scope>NUCLEOTIDE SEQUENCE [LARGE SCALE GENOMIC DNA]</scope>
    <source>
        <strain>ATCC 29366 / DSM 635 / J-10-fl</strain>
    </source>
</reference>
<feature type="chain" id="PRO_1000075284" description="Heat-inducible transcription repressor HrcA">
    <location>
        <begin position="1"/>
        <end position="372"/>
    </location>
</feature>